<comment type="function">
    <text evidence="2">Catalyzes the reversible adenylation of nicotinate mononucleotide (NaMN) to nicotinic acid adenine dinucleotide (NaAD).</text>
</comment>
<comment type="catalytic activity">
    <reaction evidence="2">
        <text>nicotinate beta-D-ribonucleotide + ATP + H(+) = deamido-NAD(+) + diphosphate</text>
        <dbReference type="Rhea" id="RHEA:22860"/>
        <dbReference type="ChEBI" id="CHEBI:15378"/>
        <dbReference type="ChEBI" id="CHEBI:30616"/>
        <dbReference type="ChEBI" id="CHEBI:33019"/>
        <dbReference type="ChEBI" id="CHEBI:57502"/>
        <dbReference type="ChEBI" id="CHEBI:58437"/>
        <dbReference type="EC" id="2.7.7.18"/>
    </reaction>
</comment>
<comment type="pathway">
    <text evidence="2">Cofactor biosynthesis; NAD(+) biosynthesis; deamido-NAD(+) from nicotinate D-ribonucleotide: step 1/1.</text>
</comment>
<comment type="similarity">
    <text evidence="2">Belongs to the NadD family.</text>
</comment>
<comment type="sequence caution" evidence="1">
    <conflict type="erroneous initiation">
        <sequence resource="EMBL-CDS" id="ABQ74216"/>
    </conflict>
    <text>Truncated N-terminus.</text>
</comment>
<reference key="1">
    <citation type="journal article" date="2008" name="PLoS ONE">
        <title>Genetic basis of virulence attenuation revealed by comparative genomic analysis of Mycobacterium tuberculosis strain H37Ra versus H37Rv.</title>
        <authorList>
            <person name="Zheng H."/>
            <person name="Lu L."/>
            <person name="Wang B."/>
            <person name="Pu S."/>
            <person name="Zhang X."/>
            <person name="Zhu G."/>
            <person name="Shi W."/>
            <person name="Zhang L."/>
            <person name="Wang H."/>
            <person name="Wang S."/>
            <person name="Zhao G."/>
            <person name="Zhang Y."/>
        </authorList>
    </citation>
    <scope>NUCLEOTIDE SEQUENCE [LARGE SCALE GENOMIC DNA]</scope>
    <source>
        <strain>ATCC 25177 / H37Ra</strain>
    </source>
</reference>
<organism>
    <name type="scientific">Mycobacterium tuberculosis (strain ATCC 25177 / H37Ra)</name>
    <dbReference type="NCBI Taxonomy" id="419947"/>
    <lineage>
        <taxon>Bacteria</taxon>
        <taxon>Bacillati</taxon>
        <taxon>Actinomycetota</taxon>
        <taxon>Actinomycetes</taxon>
        <taxon>Mycobacteriales</taxon>
        <taxon>Mycobacteriaceae</taxon>
        <taxon>Mycobacterium</taxon>
        <taxon>Mycobacterium tuberculosis complex</taxon>
    </lineage>
</organism>
<name>NADD_MYCTA</name>
<protein>
    <recommendedName>
        <fullName evidence="2">Probable nicotinate-nucleotide adenylyltransferase</fullName>
        <ecNumber evidence="2">2.7.7.18</ecNumber>
    </recommendedName>
    <alternativeName>
        <fullName evidence="2">Deamido-NAD(+) diphosphorylase</fullName>
    </alternativeName>
    <alternativeName>
        <fullName evidence="2">Deamido-NAD(+) pyrophosphorylase</fullName>
    </alternativeName>
    <alternativeName>
        <fullName evidence="2">Nicotinate mononucleotide adenylyltransferase</fullName>
        <shortName evidence="2">NaMN adenylyltransferase</shortName>
    </alternativeName>
</protein>
<evidence type="ECO:0000250" key="1">
    <source>
        <dbReference type="UniProtKB" id="P9WJJ5"/>
    </source>
</evidence>
<evidence type="ECO:0000255" key="2">
    <source>
        <dbReference type="HAMAP-Rule" id="MF_00244"/>
    </source>
</evidence>
<keyword id="KW-0067">ATP-binding</keyword>
<keyword id="KW-0520">NAD</keyword>
<keyword id="KW-0547">Nucleotide-binding</keyword>
<keyword id="KW-0548">Nucleotidyltransferase</keyword>
<keyword id="KW-0662">Pyridine nucleotide biosynthesis</keyword>
<keyword id="KW-1185">Reference proteome</keyword>
<keyword id="KW-0808">Transferase</keyword>
<feature type="chain" id="PRO_0000310125" description="Probable nicotinate-nucleotide adenylyltransferase">
    <location>
        <begin position="1"/>
        <end position="214"/>
    </location>
</feature>
<dbReference type="EC" id="2.7.7.18" evidence="2"/>
<dbReference type="EMBL" id="CP000611">
    <property type="protein sequence ID" value="ABQ74216.1"/>
    <property type="status" value="ALT_INIT"/>
    <property type="molecule type" value="Genomic_DNA"/>
</dbReference>
<dbReference type="SMR" id="A5U5B6"/>
<dbReference type="KEGG" id="mra:MRA_2447"/>
<dbReference type="eggNOG" id="COG1057">
    <property type="taxonomic scope" value="Bacteria"/>
</dbReference>
<dbReference type="HOGENOM" id="CLU_069765_1_1_11"/>
<dbReference type="UniPathway" id="UPA00253">
    <property type="reaction ID" value="UER00332"/>
</dbReference>
<dbReference type="Proteomes" id="UP000001988">
    <property type="component" value="Chromosome"/>
</dbReference>
<dbReference type="GO" id="GO:0005524">
    <property type="term" value="F:ATP binding"/>
    <property type="evidence" value="ECO:0007669"/>
    <property type="project" value="UniProtKB-KW"/>
</dbReference>
<dbReference type="GO" id="GO:0004515">
    <property type="term" value="F:nicotinate-nucleotide adenylyltransferase activity"/>
    <property type="evidence" value="ECO:0007669"/>
    <property type="project" value="UniProtKB-UniRule"/>
</dbReference>
<dbReference type="GO" id="GO:0009435">
    <property type="term" value="P:NAD biosynthetic process"/>
    <property type="evidence" value="ECO:0007669"/>
    <property type="project" value="UniProtKB-UniRule"/>
</dbReference>
<dbReference type="CDD" id="cd02165">
    <property type="entry name" value="NMNAT"/>
    <property type="match status" value="1"/>
</dbReference>
<dbReference type="FunFam" id="3.40.50.620:FF:000039">
    <property type="entry name" value="Probable nicotinate-nucleotide adenylyltransferase"/>
    <property type="match status" value="1"/>
</dbReference>
<dbReference type="Gene3D" id="3.40.50.620">
    <property type="entry name" value="HUPs"/>
    <property type="match status" value="1"/>
</dbReference>
<dbReference type="HAMAP" id="MF_00244">
    <property type="entry name" value="NaMN_adenylyltr"/>
    <property type="match status" value="1"/>
</dbReference>
<dbReference type="InterPro" id="IPR004821">
    <property type="entry name" value="Cyt_trans-like"/>
</dbReference>
<dbReference type="InterPro" id="IPR005248">
    <property type="entry name" value="NadD/NMNAT"/>
</dbReference>
<dbReference type="InterPro" id="IPR014729">
    <property type="entry name" value="Rossmann-like_a/b/a_fold"/>
</dbReference>
<dbReference type="NCBIfam" id="TIGR00125">
    <property type="entry name" value="cyt_tran_rel"/>
    <property type="match status" value="1"/>
</dbReference>
<dbReference type="NCBIfam" id="TIGR00482">
    <property type="entry name" value="nicotinate (nicotinamide) nucleotide adenylyltransferase"/>
    <property type="match status" value="1"/>
</dbReference>
<dbReference type="NCBIfam" id="NF000840">
    <property type="entry name" value="PRK00071.1-3"/>
    <property type="match status" value="1"/>
</dbReference>
<dbReference type="PANTHER" id="PTHR39321">
    <property type="entry name" value="NICOTINATE-NUCLEOTIDE ADENYLYLTRANSFERASE-RELATED"/>
    <property type="match status" value="1"/>
</dbReference>
<dbReference type="PANTHER" id="PTHR39321:SF3">
    <property type="entry name" value="PHOSPHOPANTETHEINE ADENYLYLTRANSFERASE"/>
    <property type="match status" value="1"/>
</dbReference>
<dbReference type="Pfam" id="PF01467">
    <property type="entry name" value="CTP_transf_like"/>
    <property type="match status" value="1"/>
</dbReference>
<dbReference type="SUPFAM" id="SSF52374">
    <property type="entry name" value="Nucleotidylyl transferase"/>
    <property type="match status" value="1"/>
</dbReference>
<sequence length="214" mass="23340">MGVMGGTFDPIHYGHLVAASEVADLFDLDEVVFVPSGQPWQKGRQVSAAEHRYLMTVIATASNPRFSVSRVDIDRGGPTYTKDTLADLHALHPDSELYFTTGADALASIMSWQGWEELFELARFVGVSRPGYELRNEHITSLLGQLAKDALTLVEIPALAISSTDCRQRAEQSRPLWYLMPDGVVQYVSKCRLYCGACDAGARSTTSLAAGNGL</sequence>
<accession>A5U5B6</accession>
<gene>
    <name evidence="2" type="primary">nadD</name>
    <name type="ordered locus">MRA_2447</name>
</gene>
<proteinExistence type="inferred from homology"/>